<comment type="function">
    <text evidence="1">Allows the formation of correctly charged Gln-tRNA(Gln) through the transamidation of misacylated Glu-tRNA(Gln) in the mitochondria. The reaction takes place in the presence of glutamine and ATP through an activated gamma-phospho-Glu-tRNA(Gln).</text>
</comment>
<comment type="catalytic activity">
    <reaction evidence="1">
        <text>L-glutamyl-tRNA(Gln) + L-glutamine + ATP + H2O = L-glutaminyl-tRNA(Gln) + L-glutamate + ADP + phosphate + H(+)</text>
        <dbReference type="Rhea" id="RHEA:17521"/>
        <dbReference type="Rhea" id="RHEA-COMP:9681"/>
        <dbReference type="Rhea" id="RHEA-COMP:9684"/>
        <dbReference type="ChEBI" id="CHEBI:15377"/>
        <dbReference type="ChEBI" id="CHEBI:15378"/>
        <dbReference type="ChEBI" id="CHEBI:29985"/>
        <dbReference type="ChEBI" id="CHEBI:30616"/>
        <dbReference type="ChEBI" id="CHEBI:43474"/>
        <dbReference type="ChEBI" id="CHEBI:58359"/>
        <dbReference type="ChEBI" id="CHEBI:78520"/>
        <dbReference type="ChEBI" id="CHEBI:78521"/>
        <dbReference type="ChEBI" id="CHEBI:456216"/>
    </reaction>
</comment>
<comment type="subunit">
    <text evidence="1">Subunit of the heterotrimeric GatFAB amidotransferase (AdT) complex, composed of A, B and F subunits.</text>
</comment>
<comment type="subcellular location">
    <subcellularLocation>
        <location evidence="1">Mitochondrion</location>
    </subcellularLocation>
</comment>
<comment type="miscellaneous">
    <text evidence="1">This protein may be expected to contain an N-terminal transit peptide but none has been predicted.</text>
</comment>
<comment type="similarity">
    <text evidence="1">Belongs to the GatB/GatE family. GatB subfamily.</text>
</comment>
<keyword id="KW-0067">ATP-binding</keyword>
<keyword id="KW-0436">Ligase</keyword>
<keyword id="KW-0496">Mitochondrion</keyword>
<keyword id="KW-0547">Nucleotide-binding</keyword>
<keyword id="KW-0648">Protein biosynthesis</keyword>
<accession>A6ZKM2</accession>
<protein>
    <recommendedName>
        <fullName evidence="1">Glutamyl-tRNA(Gln) amidotransferase subunit B, mitochondrial</fullName>
        <shortName evidence="1">Glu-AdT subunit B</shortName>
        <ecNumber evidence="1">6.3.5.-</ecNumber>
    </recommendedName>
</protein>
<dbReference type="EC" id="6.3.5.-" evidence="1"/>
<dbReference type="EMBL" id="AAFW02000011">
    <property type="protein sequence ID" value="EDN64541.1"/>
    <property type="molecule type" value="Genomic_DNA"/>
</dbReference>
<dbReference type="SMR" id="A6ZKM2"/>
<dbReference type="HOGENOM" id="CLU_019240_4_0_1"/>
<dbReference type="OrthoDB" id="15362at4893"/>
<dbReference type="Proteomes" id="UP000007060">
    <property type="component" value="Unassembled WGS sequence"/>
</dbReference>
<dbReference type="GO" id="GO:0030956">
    <property type="term" value="C:glutamyl-tRNA(Gln) amidotransferase complex"/>
    <property type="evidence" value="ECO:0007669"/>
    <property type="project" value="UniProtKB-UniRule"/>
</dbReference>
<dbReference type="GO" id="GO:0005739">
    <property type="term" value="C:mitochondrion"/>
    <property type="evidence" value="ECO:0007669"/>
    <property type="project" value="UniProtKB-SubCell"/>
</dbReference>
<dbReference type="GO" id="GO:0005524">
    <property type="term" value="F:ATP binding"/>
    <property type="evidence" value="ECO:0007669"/>
    <property type="project" value="UniProtKB-KW"/>
</dbReference>
<dbReference type="GO" id="GO:0050567">
    <property type="term" value="F:glutaminyl-tRNA synthase (glutamine-hydrolyzing) activity"/>
    <property type="evidence" value="ECO:0007669"/>
    <property type="project" value="UniProtKB-UniRule"/>
</dbReference>
<dbReference type="GO" id="GO:0070681">
    <property type="term" value="P:glutaminyl-tRNAGln biosynthesis via transamidation"/>
    <property type="evidence" value="ECO:0007669"/>
    <property type="project" value="UniProtKB-UniRule"/>
</dbReference>
<dbReference type="GO" id="GO:0032543">
    <property type="term" value="P:mitochondrial translation"/>
    <property type="evidence" value="ECO:0007669"/>
    <property type="project" value="UniProtKB-UniRule"/>
</dbReference>
<dbReference type="FunFam" id="1.10.10.410:FF:000005">
    <property type="entry name" value="Glutamyl-tRNA(Gln) amidotransferase subunit B, mitochondrial"/>
    <property type="match status" value="1"/>
</dbReference>
<dbReference type="Gene3D" id="1.10.10.410">
    <property type="match status" value="1"/>
</dbReference>
<dbReference type="HAMAP" id="MF_00121">
    <property type="entry name" value="GatB"/>
    <property type="match status" value="1"/>
</dbReference>
<dbReference type="InterPro" id="IPR017959">
    <property type="entry name" value="Asn/Gln-tRNA_amidoTrfase_suB/E"/>
</dbReference>
<dbReference type="InterPro" id="IPR006075">
    <property type="entry name" value="Asn/Gln-tRNA_Trfase_suB/E_cat"/>
</dbReference>
<dbReference type="InterPro" id="IPR018027">
    <property type="entry name" value="Asn/Gln_amidotransferase"/>
</dbReference>
<dbReference type="InterPro" id="IPR003789">
    <property type="entry name" value="Asn/Gln_tRNA_amidoTrase-B-like"/>
</dbReference>
<dbReference type="InterPro" id="IPR004413">
    <property type="entry name" value="GatB"/>
</dbReference>
<dbReference type="InterPro" id="IPR023168">
    <property type="entry name" value="GatB_Yqey_C_2"/>
</dbReference>
<dbReference type="InterPro" id="IPR017958">
    <property type="entry name" value="Gln-tRNA_amidoTrfase_suB_CS"/>
</dbReference>
<dbReference type="InterPro" id="IPR014746">
    <property type="entry name" value="Gln_synth/guanido_kin_cat_dom"/>
</dbReference>
<dbReference type="NCBIfam" id="TIGR00133">
    <property type="entry name" value="gatB"/>
    <property type="match status" value="1"/>
</dbReference>
<dbReference type="NCBIfam" id="NF004012">
    <property type="entry name" value="PRK05477.1-2"/>
    <property type="match status" value="1"/>
</dbReference>
<dbReference type="PANTHER" id="PTHR11659">
    <property type="entry name" value="GLUTAMYL-TRNA GLN AMIDOTRANSFERASE SUBUNIT B MITOCHONDRIAL AND PROKARYOTIC PET112-RELATED"/>
    <property type="match status" value="1"/>
</dbReference>
<dbReference type="PANTHER" id="PTHR11659:SF0">
    <property type="entry name" value="GLUTAMYL-TRNA(GLN) AMIDOTRANSFERASE SUBUNIT B, MITOCHONDRIAL"/>
    <property type="match status" value="1"/>
</dbReference>
<dbReference type="Pfam" id="PF02934">
    <property type="entry name" value="GatB_N"/>
    <property type="match status" value="1"/>
</dbReference>
<dbReference type="Pfam" id="PF02637">
    <property type="entry name" value="GatB_Yqey"/>
    <property type="match status" value="1"/>
</dbReference>
<dbReference type="SMART" id="SM00845">
    <property type="entry name" value="GatB_Yqey"/>
    <property type="match status" value="1"/>
</dbReference>
<dbReference type="SUPFAM" id="SSF89095">
    <property type="entry name" value="GatB/YqeY motif"/>
    <property type="match status" value="1"/>
</dbReference>
<dbReference type="SUPFAM" id="SSF55931">
    <property type="entry name" value="Glutamine synthetase/guanido kinase"/>
    <property type="match status" value="1"/>
</dbReference>
<dbReference type="PROSITE" id="PS01234">
    <property type="entry name" value="GATB"/>
    <property type="match status" value="1"/>
</dbReference>
<evidence type="ECO:0000255" key="1">
    <source>
        <dbReference type="HAMAP-Rule" id="MF_03147"/>
    </source>
</evidence>
<gene>
    <name evidence="1" type="primary">PET112</name>
    <name type="ORF">SCY_0142</name>
</gene>
<organism>
    <name type="scientific">Saccharomyces cerevisiae (strain YJM789)</name>
    <name type="common">Baker's yeast</name>
    <dbReference type="NCBI Taxonomy" id="307796"/>
    <lineage>
        <taxon>Eukaryota</taxon>
        <taxon>Fungi</taxon>
        <taxon>Dikarya</taxon>
        <taxon>Ascomycota</taxon>
        <taxon>Saccharomycotina</taxon>
        <taxon>Saccharomycetes</taxon>
        <taxon>Saccharomycetales</taxon>
        <taxon>Saccharomycetaceae</taxon>
        <taxon>Saccharomyces</taxon>
    </lineage>
</organism>
<name>GATB_YEAS7</name>
<proteinExistence type="inferred from homology"/>
<feature type="chain" id="PRO_0000413279" description="Glutamyl-tRNA(Gln) amidotransferase subunit B, mitochondrial">
    <location>
        <begin position="1"/>
        <end position="541"/>
    </location>
</feature>
<sequence length="541" mass="61813">MLQLARFYSLARTKAIHSHGAPFRPEYALKCGLEIHTQLNTKNKLFSQSTNSATSLVDAPNHHTSYYDIALPGTQPVLNLEAILFAMKLSLALGSQVNSISQFDRKHYFYGDQPQGYQLTQHYRPFARGGKINLSKELDDIDESAKEIGILQLQIEQDTGKSHYTETDKDVITLVDLNRSNVPLIELVTKPDFSDIKQVRAFIKKYQNLVRHLHISSGDLETGAMRVDVNLSINEYARVELKNLPNTSSIINAIKYEYQRQVELISVGDTSSLMEPETRGWTGSSTVKLRSKETTIDYRYMPDPELPYINLAPDVISGVRGLMPQLPDDIMRILMKKPYQLSLKDAKILTYNSNQNDMYNHEALRSYYLDTFREFSKLAGERSNAKLPTNWIIHEFLGDLNKLQIPLAKAKEILPPPVFAQFLKLLHEEVISATSGKMLLFHILESFKQSNCQDLSIPDFSKLIEKFELHAINQVDPQELMDLCNDVIAQHTDDTFIRNLVTGKKKSSLKFLIGQGMRRSQGRIKANEFEKKFKEILNIQW</sequence>
<reference key="1">
    <citation type="journal article" date="2007" name="Proc. Natl. Acad. Sci. U.S.A.">
        <title>Genome sequencing and comparative analysis of Saccharomyces cerevisiae strain YJM789.</title>
        <authorList>
            <person name="Wei W."/>
            <person name="McCusker J.H."/>
            <person name="Hyman R.W."/>
            <person name="Jones T."/>
            <person name="Ning Y."/>
            <person name="Cao Z."/>
            <person name="Gu Z."/>
            <person name="Bruno D."/>
            <person name="Miranda M."/>
            <person name="Nguyen M."/>
            <person name="Wilhelmy J."/>
            <person name="Komp C."/>
            <person name="Tamse R."/>
            <person name="Wang X."/>
            <person name="Jia P."/>
            <person name="Luedi P."/>
            <person name="Oefner P.J."/>
            <person name="David L."/>
            <person name="Dietrich F.S."/>
            <person name="Li Y."/>
            <person name="Davis R.W."/>
            <person name="Steinmetz L.M."/>
        </authorList>
    </citation>
    <scope>NUCLEOTIDE SEQUENCE [LARGE SCALE GENOMIC DNA]</scope>
    <source>
        <strain>YJM789</strain>
    </source>
</reference>